<protein>
    <recommendedName>
        <fullName>Glutamate receptor ionotropic, delta-2</fullName>
        <shortName>GluD2</shortName>
        <shortName>GluR delta-2 subunit</shortName>
    </recommendedName>
</protein>
<comment type="function">
    <text evidence="9 11 12 13 14">Member of the ionotropic glutamate receptor family, which plays a crucial role in synaptic organization and signal transduction in the central nervous system. Although it shares structural features with ionotropic glutamate receptors, does not bind glutamate as a primary ligand (PubMed:34936451). Promotes synaptogenesis and mediates the D-Serine-dependent long term depression signals and AMPA receptor endocytosis of cerebellar parallel fiber-Purkinje cell (PF-PC) synapses through the NRX1B-CBLN1-GRID2 triad complex (PubMed:27418511). In the presence of neurexins and cerebellins, forms cation-selective channels that are proposed to be gated by glycine and D-serine (PubMed:34936451). However, recent research disputes this ligand-gated cation channel activity (PubMed:39052831). Cation-selective ion channel activity can be triggered by GRM1 in Purkinje cells (PubMed:24357660, PubMed:27276689).</text>
</comment>
<comment type="catalytic activity">
    <reaction evidence="18">
        <text>Ca(2+)(in) = Ca(2+)(out)</text>
        <dbReference type="Rhea" id="RHEA:29671"/>
        <dbReference type="ChEBI" id="CHEBI:29108"/>
    </reaction>
</comment>
<comment type="catalytic activity">
    <reaction evidence="18">
        <text>Na(+)(in) = Na(+)(out)</text>
        <dbReference type="Rhea" id="RHEA:34963"/>
        <dbReference type="ChEBI" id="CHEBI:29101"/>
    </reaction>
</comment>
<comment type="subunit">
    <text evidence="2 3 12">Tetramer; dimer of dimers (PubMed:27418511). Interacts with EML2, MAGI2 (via PDZ domains) and AP4M1 (By similarity). Interacts with BECN1, GOPC, GRID2IP, SHANK1 and SHANK2. Interacts with CBLN2, but not with CBLN4 (By similarity). Interacts with CBLN1 (via C1q domain); the interaction is CBLN1-NRX1 complex formation-dependent; CBLN1-binding is calcium-independent; CBLN1 hexamers anchor GRID2 N-terminal domain dimers to monomeric NRXN1 isoform beta; promotes synaptogenesis and mediates the D-Serine-dependent long term depression signals and AMPA receptor endocytosis (PubMed:27418511).</text>
</comment>
<comment type="subcellular location">
    <subcellularLocation>
        <location evidence="2">Postsynaptic cell membrane</location>
        <topology evidence="5">Multi-pass membrane protein</topology>
    </subcellularLocation>
</comment>
<comment type="alternative products">
    <event type="alternative splicing"/>
    <isoform>
        <id>O43424-1</id>
        <name>1</name>
        <sequence type="displayed"/>
    </isoform>
    <isoform>
        <id>O43424-2</id>
        <name>2</name>
        <sequence type="described" ref="VSP_054704"/>
    </isoform>
</comment>
<comment type="domain">
    <text evidence="2">The PDZ-binding motif mediates interaction with GOPC.</text>
</comment>
<comment type="disease" evidence="7 8 10 12">
    <disease id="DI-04317">
        <name>Spinocerebellar ataxia, autosomal recessive, 18</name>
        <acronym>SCAR18</acronym>
        <description>A form of spinocerebellar ataxia, a clinically and genetically heterogeneous group of cerebellar disorders. Patients show progressive incoordination of gait and often poor coordination of hands, speech and eye movements, due to degeneration of the cerebellum with variable involvement of the brainstem and spinal cord. SCAR18 features include progressive cerebellar atrophy, delayed psychomotor development, severely impaired gait, ocular movement abnormalities, and intellectual disability.</description>
        <dbReference type="MIM" id="616204"/>
    </disease>
    <text>The disease is caused by variants affecting the gene represented in this entry.</text>
</comment>
<comment type="similarity">
    <text evidence="17">Belongs to the glutamate-gated ion channel (TC 1.A.10.1) family. GRID2 subfamily.</text>
</comment>
<comment type="caution">
    <text evidence="13 14">The ligand-gated cation channel activity triggered by glycine and D-serine, first reported in an article, has been a subject of controversy (PubMed:34936451). These findings have been challenged by more recent research (PubMed:39052831).</text>
</comment>
<comment type="sequence caution" evidence="17">
    <conflict type="erroneous initiation">
        <sequence resource="EMBL-CDS" id="BAD92555"/>
    </conflict>
    <text>Extended N-terminus.</text>
</comment>
<reference key="1">
    <citation type="journal article" date="1998" name="Genomics">
        <title>The human glutamate receptor delta 2 gene (GRID2) maps to chromosome 4q22.</title>
        <authorList>
            <person name="Hu W."/>
            <person name="Zuo J."/>
            <person name="De Jager P.L."/>
            <person name="Heintz N."/>
        </authorList>
    </citation>
    <scope>NUCLEOTIDE SEQUENCE [MRNA] (ISOFORM 1)</scope>
    <source>
        <tissue>Cerebellum</tissue>
    </source>
</reference>
<reference key="2">
    <citation type="submission" date="2005-03" db="EMBL/GenBank/DDBJ databases">
        <authorList>
            <person name="Totoki Y."/>
            <person name="Toyoda A."/>
            <person name="Takeda T."/>
            <person name="Sakaki Y."/>
            <person name="Tanaka A."/>
            <person name="Yokoyama S."/>
            <person name="Ohara O."/>
            <person name="Nagase T."/>
            <person name="Kikuno R.F."/>
        </authorList>
    </citation>
    <scope>NUCLEOTIDE SEQUENCE [LARGE SCALE MRNA] (ISOFORM 1)</scope>
    <scope>VARIANT MET-68</scope>
    <source>
        <tissue>Brain</tissue>
    </source>
</reference>
<reference key="3">
    <citation type="journal article" date="2005" name="Nature">
        <title>Generation and annotation of the DNA sequences of human chromosomes 2 and 4.</title>
        <authorList>
            <person name="Hillier L.W."/>
            <person name="Graves T.A."/>
            <person name="Fulton R.S."/>
            <person name="Fulton L.A."/>
            <person name="Pepin K.H."/>
            <person name="Minx P."/>
            <person name="Wagner-McPherson C."/>
            <person name="Layman D."/>
            <person name="Wylie K."/>
            <person name="Sekhon M."/>
            <person name="Becker M.C."/>
            <person name="Fewell G.A."/>
            <person name="Delehaunty K.D."/>
            <person name="Miner T.L."/>
            <person name="Nash W.E."/>
            <person name="Kremitzki C."/>
            <person name="Oddy L."/>
            <person name="Du H."/>
            <person name="Sun H."/>
            <person name="Bradshaw-Cordum H."/>
            <person name="Ali J."/>
            <person name="Carter J."/>
            <person name="Cordes M."/>
            <person name="Harris A."/>
            <person name="Isak A."/>
            <person name="van Brunt A."/>
            <person name="Nguyen C."/>
            <person name="Du F."/>
            <person name="Courtney L."/>
            <person name="Kalicki J."/>
            <person name="Ozersky P."/>
            <person name="Abbott S."/>
            <person name="Armstrong J."/>
            <person name="Belter E.A."/>
            <person name="Caruso L."/>
            <person name="Cedroni M."/>
            <person name="Cotton M."/>
            <person name="Davidson T."/>
            <person name="Desai A."/>
            <person name="Elliott G."/>
            <person name="Erb T."/>
            <person name="Fronick C."/>
            <person name="Gaige T."/>
            <person name="Haakenson W."/>
            <person name="Haglund K."/>
            <person name="Holmes A."/>
            <person name="Harkins R."/>
            <person name="Kim K."/>
            <person name="Kruchowski S.S."/>
            <person name="Strong C.M."/>
            <person name="Grewal N."/>
            <person name="Goyea E."/>
            <person name="Hou S."/>
            <person name="Levy A."/>
            <person name="Martinka S."/>
            <person name="Mead K."/>
            <person name="McLellan M.D."/>
            <person name="Meyer R."/>
            <person name="Randall-Maher J."/>
            <person name="Tomlinson C."/>
            <person name="Dauphin-Kohlberg S."/>
            <person name="Kozlowicz-Reilly A."/>
            <person name="Shah N."/>
            <person name="Swearengen-Shahid S."/>
            <person name="Snider J."/>
            <person name="Strong J.T."/>
            <person name="Thompson J."/>
            <person name="Yoakum M."/>
            <person name="Leonard S."/>
            <person name="Pearman C."/>
            <person name="Trani L."/>
            <person name="Radionenko M."/>
            <person name="Waligorski J.E."/>
            <person name="Wang C."/>
            <person name="Rock S.M."/>
            <person name="Tin-Wollam A.-M."/>
            <person name="Maupin R."/>
            <person name="Latreille P."/>
            <person name="Wendl M.C."/>
            <person name="Yang S.-P."/>
            <person name="Pohl C."/>
            <person name="Wallis J.W."/>
            <person name="Spieth J."/>
            <person name="Bieri T.A."/>
            <person name="Berkowicz N."/>
            <person name="Nelson J.O."/>
            <person name="Osborne J."/>
            <person name="Ding L."/>
            <person name="Meyer R."/>
            <person name="Sabo A."/>
            <person name="Shotland Y."/>
            <person name="Sinha P."/>
            <person name="Wohldmann P.E."/>
            <person name="Cook L.L."/>
            <person name="Hickenbotham M.T."/>
            <person name="Eldred J."/>
            <person name="Williams D."/>
            <person name="Jones T.A."/>
            <person name="She X."/>
            <person name="Ciccarelli F.D."/>
            <person name="Izaurralde E."/>
            <person name="Taylor J."/>
            <person name="Schmutz J."/>
            <person name="Myers R.M."/>
            <person name="Cox D.R."/>
            <person name="Huang X."/>
            <person name="McPherson J.D."/>
            <person name="Mardis E.R."/>
            <person name="Clifton S.W."/>
            <person name="Warren W.C."/>
            <person name="Chinwalla A.T."/>
            <person name="Eddy S.R."/>
            <person name="Marra M.A."/>
            <person name="Ovcharenko I."/>
            <person name="Furey T.S."/>
            <person name="Miller W."/>
            <person name="Eichler E.E."/>
            <person name="Bork P."/>
            <person name="Suyama M."/>
            <person name="Torrents D."/>
            <person name="Waterston R.H."/>
            <person name="Wilson R.K."/>
        </authorList>
    </citation>
    <scope>NUCLEOTIDE SEQUENCE [LARGE SCALE GENOMIC DNA]</scope>
</reference>
<reference key="4">
    <citation type="journal article" date="2004" name="Genome Res.">
        <title>The status, quality, and expansion of the NIH full-length cDNA project: the Mammalian Gene Collection (MGC).</title>
        <authorList>
            <consortium name="The MGC Project Team"/>
        </authorList>
    </citation>
    <scope>NUCLEOTIDE SEQUENCE [LARGE SCALE MRNA] (ISOFORMS 1 AND 2)</scope>
</reference>
<reference key="5">
    <citation type="journal article" date="2014" name="EMBO Rep.">
        <title>Type 1 metabotropic glutamate receptors (mGlu1) trigger the gating of GluD2 delta glutamate receptors.</title>
        <authorList>
            <person name="Ady V."/>
            <person name="Perroy J."/>
            <person name="Tricoire L."/>
            <person name="Piochon C."/>
            <person name="Dadak S."/>
            <person name="Chen X."/>
            <person name="Dusart I."/>
            <person name="Fagni L."/>
            <person name="Lambolez B."/>
            <person name="Levenes C."/>
        </authorList>
    </citation>
    <scope>FUNCTION</scope>
    <scope>MUTAGENESIS OF VAL-617</scope>
    <scope>SUBCELLULAR LOCATION</scope>
</reference>
<reference key="6">
    <citation type="journal article" date="2017" name="Neuropharmacology">
        <title>mGlu1 receptor canonical signaling pathway contributes to the opening of the orphan GluD2 receptor.</title>
        <authorList>
            <person name="Dadak S."/>
            <person name="Bouquier N."/>
            <person name="Goyet E."/>
            <person name="Fagni L."/>
            <person name="Levenes C."/>
            <person name="Perroy J."/>
        </authorList>
    </citation>
    <scope>FUNCTION</scope>
</reference>
<reference key="7">
    <citation type="journal article" date="2021" name="Sci. Adv.">
        <title>Delta glutamate receptors are functional glycine- and D-serine-gated cation channels in situ.</title>
        <authorList>
            <person name="Carrillo E."/>
            <person name="Gonzalez C.U."/>
            <person name="Berka V."/>
            <person name="Jayaraman V."/>
        </authorList>
    </citation>
    <scope>FUNCTION</scope>
    <scope>TRANSPORTER ACTIVITY</scope>
</reference>
<reference key="8">
    <citation type="journal article" date="2024" name="Proc. Natl. Acad. Sci. U.S.A.">
        <title>Lack of evidence for direct ligand-gated ion channel activity of GluD receptors.</title>
        <authorList>
            <person name="Itoh M."/>
            <person name="Piot L."/>
            <person name="Mony L."/>
            <person name="Paoletti P."/>
            <person name="Yuzaki M."/>
        </authorList>
    </citation>
    <scope>FUNCTION</scope>
    <scope>CAUTION</scope>
</reference>
<reference key="9">
    <citation type="journal article" date="2016" name="Science">
        <title>Structural basis for integration of GluD receptors within synaptic organizer complexes.</title>
        <authorList>
            <person name="Elegheert J."/>
            <person name="Kakegawa W."/>
            <person name="Clay J.E."/>
            <person name="Shanks N.F."/>
            <person name="Behiels E."/>
            <person name="Matsuda K."/>
            <person name="Kohda K."/>
            <person name="Miura E."/>
            <person name="Rossmann M."/>
            <person name="Mitakidis N."/>
            <person name="Motohashi J."/>
            <person name="Chang V.T."/>
            <person name="Siebold C."/>
            <person name="Greger I.H."/>
            <person name="Nakagawa T."/>
            <person name="Yuzaki M."/>
            <person name="Aricescu A.R."/>
        </authorList>
    </citation>
    <scope>X-RAY CRYSTALLOGRAPHY (1.75 ANGSTROMS) OF 24-440</scope>
    <scope>DISULFIDE BONDS</scope>
    <scope>INTERACTION WITH CBLN1</scope>
    <scope>MUTAGENESIS OF ASP-24; SER-25; ILE-26; THR-60; GLU-61; PHE-76; LEU-342; GLU-343; ASP-344; ARG-345; LYS-346; HIS-348; SER-349; MET-350; SER-352; GLN-364 AND LEU-434</scope>
    <scope>SUBUNIT</scope>
    <scope>FUNCTION</scope>
    <scope>REGION</scope>
    <scope>SITE</scope>
    <scope>CHARACTERIZATION OF VARIANT SCAR18 THR-654</scope>
</reference>
<reference key="10">
    <citation type="journal article" date="2013" name="J. Child Neurol.">
        <title>A homozygous deletion in GRID2 causes a human phenotype with cerebellar ataxia and atrophy.</title>
        <authorList>
            <person name="Utine G.E."/>
            <person name="Haliloglu G."/>
            <person name="Salanci B."/>
            <person name="Cetinkaya A."/>
            <person name="Kiper P.O."/>
            <person name="Alanay Y."/>
            <person name="Aktas D."/>
            <person name="Boduroglu K."/>
            <person name="Alikasifoglu M."/>
        </authorList>
    </citation>
    <scope>INVOLVEMENT IN SCAR18</scope>
</reference>
<reference key="11">
    <citation type="journal article" date="2013" name="Neurology">
        <title>Deletions in GRID2 lead to a recessive syndrome of cerebellar ataxia and tonic upgaze in humans.</title>
        <authorList>
            <person name="Hills L.B."/>
            <person name="Masri A."/>
            <person name="Konno K."/>
            <person name="Kakegawa W."/>
            <person name="Lam A.T."/>
            <person name="Lim-Melia E."/>
            <person name="Chandy N."/>
            <person name="Hill R.S."/>
            <person name="Partlow J.N."/>
            <person name="Al-Saffar M."/>
            <person name="Nasir R."/>
            <person name="Stoler J.M."/>
            <person name="Barkovich A.J."/>
            <person name="Watanabe M."/>
            <person name="Yuzaki M."/>
            <person name="Mochida G.H."/>
        </authorList>
    </citation>
    <scope>INVOLVEMENT IN SCAR18</scope>
</reference>
<reference key="12">
    <citation type="journal article" date="2006" name="Science">
        <title>The consensus coding sequences of human breast and colorectal cancers.</title>
        <authorList>
            <person name="Sjoeblom T."/>
            <person name="Jones S."/>
            <person name="Wood L.D."/>
            <person name="Parsons D.W."/>
            <person name="Lin J."/>
            <person name="Barber T.D."/>
            <person name="Mandelker D."/>
            <person name="Leary R.J."/>
            <person name="Ptak J."/>
            <person name="Silliman N."/>
            <person name="Szabo S."/>
            <person name="Buckhaults P."/>
            <person name="Farrell C."/>
            <person name="Meeh P."/>
            <person name="Markowitz S.D."/>
            <person name="Willis J."/>
            <person name="Dawson D."/>
            <person name="Willson J.K.V."/>
            <person name="Gazdar A.F."/>
            <person name="Hartigan J."/>
            <person name="Wu L."/>
            <person name="Liu C."/>
            <person name="Parmigiani G."/>
            <person name="Park B.H."/>
            <person name="Bachman K.E."/>
            <person name="Papadopoulos N."/>
            <person name="Vogelstein B."/>
            <person name="Kinzler K.W."/>
            <person name="Velculescu V.E."/>
        </authorList>
    </citation>
    <scope>VARIANT [LARGE SCALE ANALYSIS] ASN-209</scope>
</reference>
<reference key="13">
    <citation type="journal article" date="2015" name="Neurology">
        <title>GRID2 mutations span from congenital to mild adult-onset cerebellar ataxia.</title>
        <authorList>
            <person name="Coutelier M."/>
            <person name="Burglen L."/>
            <person name="Mundwiller E."/>
            <person name="Abada-Bendib M."/>
            <person name="Rodriguez D."/>
            <person name="Chantot-Bastaraud S."/>
            <person name="Rougeot C."/>
            <person name="Cournelle M.A."/>
            <person name="Milh M."/>
            <person name="Toutain A."/>
            <person name="Bacq D."/>
            <person name="Meyer V."/>
            <person name="Afenjar A."/>
            <person name="Deleuze J.F."/>
            <person name="Brice A."/>
            <person name="Heron D."/>
            <person name="Stevanin G."/>
            <person name="Durr A."/>
        </authorList>
    </citation>
    <scope>VARIANTS SCAR18 ASP-654; THR-654 AND VAL-656</scope>
</reference>
<proteinExistence type="evidence at protein level"/>
<keyword id="KW-0002">3D-structure</keyword>
<keyword id="KW-0025">Alternative splicing</keyword>
<keyword id="KW-0106">Calcium</keyword>
<keyword id="KW-1003">Cell membrane</keyword>
<keyword id="KW-1015">Disulfide bond</keyword>
<keyword id="KW-0325">Glycoprotein</keyword>
<keyword id="KW-0407">Ion channel</keyword>
<keyword id="KW-0406">Ion transport</keyword>
<keyword id="KW-1071">Ligand-gated ion channel</keyword>
<keyword id="KW-0472">Membrane</keyword>
<keyword id="KW-0479">Metal-binding</keyword>
<keyword id="KW-0523">Neurodegeneration</keyword>
<keyword id="KW-0597">Phosphoprotein</keyword>
<keyword id="KW-0628">Postsynaptic cell membrane</keyword>
<keyword id="KW-1267">Proteomics identification</keyword>
<keyword id="KW-0675">Receptor</keyword>
<keyword id="KW-1185">Reference proteome</keyword>
<keyword id="KW-0732">Signal</keyword>
<keyword id="KW-0770">Synapse</keyword>
<keyword id="KW-0812">Transmembrane</keyword>
<keyword id="KW-1133">Transmembrane helix</keyword>
<keyword id="KW-0813">Transport</keyword>
<evidence type="ECO:0000250" key="1"/>
<evidence type="ECO:0000250" key="2">
    <source>
        <dbReference type="UniProtKB" id="Q61625"/>
    </source>
</evidence>
<evidence type="ECO:0000250" key="3">
    <source>
        <dbReference type="UniProtKB" id="Q63226"/>
    </source>
</evidence>
<evidence type="ECO:0000250" key="4">
    <source>
        <dbReference type="UniProtKB" id="Q9ULK0"/>
    </source>
</evidence>
<evidence type="ECO:0000255" key="5"/>
<evidence type="ECO:0000269" key="6">
    <source>
    </source>
</evidence>
<evidence type="ECO:0000269" key="7">
    <source>
    </source>
</evidence>
<evidence type="ECO:0000269" key="8">
    <source>
    </source>
</evidence>
<evidence type="ECO:0000269" key="9">
    <source>
    </source>
</evidence>
<evidence type="ECO:0000269" key="10">
    <source>
    </source>
</evidence>
<evidence type="ECO:0000269" key="11">
    <source>
    </source>
</evidence>
<evidence type="ECO:0000269" key="12">
    <source>
    </source>
</evidence>
<evidence type="ECO:0000269" key="13">
    <source>
    </source>
</evidence>
<evidence type="ECO:0000269" key="14">
    <source>
    </source>
</evidence>
<evidence type="ECO:0000269" key="15">
    <source ref="2"/>
</evidence>
<evidence type="ECO:0000303" key="16">
    <source>
    </source>
</evidence>
<evidence type="ECO:0000305" key="17"/>
<evidence type="ECO:0000305" key="18">
    <source>
    </source>
</evidence>
<evidence type="ECO:0007744" key="19">
    <source>
        <dbReference type="PDB" id="5KC8"/>
    </source>
</evidence>
<evidence type="ECO:0007744" key="20">
    <source>
        <dbReference type="PDB" id="5KCA"/>
    </source>
</evidence>
<evidence type="ECO:0007829" key="21">
    <source>
        <dbReference type="PDB" id="5KC8"/>
    </source>
</evidence>
<evidence type="ECO:0007829" key="22">
    <source>
        <dbReference type="PDB" id="5KCA"/>
    </source>
</evidence>
<organism>
    <name type="scientific">Homo sapiens</name>
    <name type="common">Human</name>
    <dbReference type="NCBI Taxonomy" id="9606"/>
    <lineage>
        <taxon>Eukaryota</taxon>
        <taxon>Metazoa</taxon>
        <taxon>Chordata</taxon>
        <taxon>Craniata</taxon>
        <taxon>Vertebrata</taxon>
        <taxon>Euteleostomi</taxon>
        <taxon>Mammalia</taxon>
        <taxon>Eutheria</taxon>
        <taxon>Euarchontoglires</taxon>
        <taxon>Primates</taxon>
        <taxon>Haplorrhini</taxon>
        <taxon>Catarrhini</taxon>
        <taxon>Hominidae</taxon>
        <taxon>Homo</taxon>
    </lineage>
</organism>
<name>GRID2_HUMAN</name>
<sequence length="1007" mass="113356">MEVFPFLLVLSVWWSRTWDSANADSIIHIGAIFDESAKKDDEVFRTAVGDLNQNEEILQTEKITFSVTFVDGNNPFQAVQEACELMNQGILALVSSIGCTSAGSLQSLADAMHIPHLFIQRSTAGTPRSGCGLTRSNRNDDYTLSVRPPVYLHDVILRVVTEYAWQKFIIFYDSEYDIRGIQEFLDKVSQQGMDVALQKVENNINKMITTLFDTMRIEELNRYRDTLRRAILVMNPATAKSFITEVVETNLVAFDCHWIIINEEINDVDVQELVRRSIGRLTIIRQTFPVPQNISQRCFRGNHRISSTLCDPKDPFAQNMEISNLYIYDTVLLLANAFHKKLEDRKWHSMASLSCIRKNSKPWQGGRSMLETIKKGGVSGLTGELEFGENGGNPNVHFEILGTNYGEELGRGVRKLGCWNPVTGLNGSLTDKKLENNMRGVVLRVVTVLEEPFVMVSENVLGKPKKYQGFSIDVLDALSNYLGFNYEIYVAPDHKYGSPQEDGTWNGLVGELVFKRADIGISALTITPDRENVVDFTTRYMDYSVGVLLRRAEKTVDMFACLAPFDLSLWACIAGTVLLVGLLVYLLNWLNPPRLQMGSMTSTTLYNSMWFVYGSFVQQGGEVPYTTLATRMMMGAWWLFALIVISSYTANLAAFLTITRIESSIQSLQDLSKQTEIPYGTVLDSAVYEHVRMKGLNPFERDSMYSQMWRMINRSNGSENNVLESQAGIQKVKYGNYAFVWDAAVLEYVAINDPDCSFYTIGNTVADRGYGIALQHGSPYRDVFSQRILELQQNGDMDILKHKWWPKNGQCDLYSSVDTKQKGGALDIKSFAGVFCILAAGIVLSCFIAMLETWWNKRKGSRVPSKEDDKEIDLEHLHRRVNSLCTDDDSPHKQFSTSSIDLTPLDIDTLPTRQALEQISDFRNTHITTTTFIPEQIQTLSRTLSAKAASGFTFGNVPEHRTGPFRHRAPNGGFFRSPIKTMSSIPYQPTPTLGLNLGNDPDRGTSI</sequence>
<feature type="signal peptide" evidence="5">
    <location>
        <begin position="1"/>
        <end position="23"/>
    </location>
</feature>
<feature type="chain" id="PRO_0000011564" description="Glutamate receptor ionotropic, delta-2">
    <location>
        <begin position="24"/>
        <end position="1007"/>
    </location>
</feature>
<feature type="topological domain" description="Extracellular" evidence="5">
    <location>
        <begin position="24"/>
        <end position="566"/>
    </location>
</feature>
<feature type="transmembrane region" description="Helical" evidence="5">
    <location>
        <begin position="567"/>
        <end position="587"/>
    </location>
</feature>
<feature type="topological domain" description="Cytoplasmic" evidence="5">
    <location>
        <begin position="588"/>
        <end position="635"/>
    </location>
</feature>
<feature type="transmembrane region" description="Helical" evidence="5">
    <location>
        <begin position="636"/>
        <end position="656"/>
    </location>
</feature>
<feature type="topological domain" description="Extracellular" evidence="5">
    <location>
        <begin position="657"/>
        <end position="830"/>
    </location>
</feature>
<feature type="transmembrane region" description="Helical" evidence="5">
    <location>
        <begin position="831"/>
        <end position="851"/>
    </location>
</feature>
<feature type="topological domain" description="Cytoplasmic" evidence="5">
    <location>
        <begin position="852"/>
        <end position="1007"/>
    </location>
</feature>
<feature type="region of interest" description="Interaction with CBLN1 homotrimer" evidence="12">
    <location>
        <begin position="24"/>
        <end position="345"/>
    </location>
</feature>
<feature type="region of interest" description="Interaction with AP4M1" evidence="3">
    <location>
        <begin position="921"/>
        <end position="991"/>
    </location>
</feature>
<feature type="short sequence motif" description="PDZ-binding" evidence="1">
    <location>
        <begin position="1005"/>
        <end position="1007"/>
    </location>
</feature>
<feature type="binding site" evidence="4">
    <location>
        <position position="531"/>
    </location>
    <ligand>
        <name>Ca(2+)</name>
        <dbReference type="ChEBI" id="CHEBI:29108"/>
        <label>1</label>
    </ligand>
</feature>
<feature type="binding site" evidence="4">
    <location>
        <position position="534"/>
    </location>
    <ligand>
        <name>Ca(2+)</name>
        <dbReference type="ChEBI" id="CHEBI:29108"/>
        <label>1</label>
    </ligand>
</feature>
<feature type="binding site" evidence="4">
    <location>
        <position position="535"/>
    </location>
    <ligand>
        <name>Ca(2+)</name>
        <dbReference type="ChEBI" id="CHEBI:29108"/>
        <label>1</label>
    </ligand>
</feature>
<feature type="binding site" evidence="4">
    <location>
        <position position="753"/>
    </location>
    <ligand>
        <name>Ca(2+)</name>
        <dbReference type="ChEBI" id="CHEBI:29108"/>
        <label>2</label>
    </ligand>
</feature>
<feature type="binding site" evidence="4">
    <location>
        <position position="755"/>
    </location>
    <ligand>
        <name>Ca(2+)</name>
        <dbReference type="ChEBI" id="CHEBI:29108"/>
        <label>2</label>
    </ligand>
</feature>
<feature type="binding site" evidence="4">
    <location>
        <position position="757"/>
    </location>
    <ligand>
        <name>Ca(2+)</name>
        <dbReference type="ChEBI" id="CHEBI:29108"/>
        <label>2</label>
    </ligand>
</feature>
<feature type="site" description="Essential for dimerization" evidence="12">
    <location>
        <position position="76"/>
    </location>
</feature>
<feature type="modified residue" description="Phosphoserine" evidence="2">
    <location>
        <position position="883"/>
    </location>
</feature>
<feature type="modified residue" description="Phosphothreonine" evidence="2">
    <location>
        <position position="886"/>
    </location>
</feature>
<feature type="modified residue" description="Phosphoserine" evidence="2">
    <location>
        <position position="890"/>
    </location>
</feature>
<feature type="modified residue" description="Phosphoserine" evidence="3">
    <location>
        <position position="1006"/>
    </location>
</feature>
<feature type="glycosylation site" description="N-linked (GlcNAc...) asparagine" evidence="5">
    <location>
        <position position="293"/>
    </location>
</feature>
<feature type="glycosylation site" description="N-linked (GlcNAc...) asparagine" evidence="5">
    <location>
        <position position="426"/>
    </location>
</feature>
<feature type="glycosylation site" description="N-linked (GlcNAc...) asparagine" evidence="5">
    <location>
        <position position="713"/>
    </location>
</feature>
<feature type="glycosylation site" description="N-linked (GlcNAc...) asparagine" evidence="5">
    <location>
        <position position="716"/>
    </location>
</feature>
<feature type="disulfide bond" evidence="12 19 20">
    <location>
        <begin position="83"/>
        <end position="355"/>
    </location>
</feature>
<feature type="disulfide bond" evidence="12 19 20">
    <location>
        <begin position="99"/>
        <end position="131"/>
    </location>
</feature>
<feature type="disulfide bond" evidence="12 19 20">
    <location>
        <begin position="298"/>
        <end position="310"/>
    </location>
</feature>
<feature type="splice variant" id="VSP_054704" description="In isoform 2." evidence="16">
    <location>
        <begin position="82"/>
        <end position="176"/>
    </location>
</feature>
<feature type="sequence variant" id="VAR_055016" description="In dbSNP:rs34144324." evidence="15">
    <original>T</original>
    <variation>M</variation>
    <location>
        <position position="68"/>
    </location>
</feature>
<feature type="sequence variant" id="VAR_035697" description="In a colorectal cancer sample; somatic mutation." evidence="6">
    <original>T</original>
    <variation>N</variation>
    <location>
        <position position="209"/>
    </location>
</feature>
<feature type="sequence variant" id="VAR_055017" description="In dbSNP:rs34796082.">
    <original>F</original>
    <variation>S</variation>
    <location>
        <position position="398"/>
    </location>
</feature>
<feature type="sequence variant" id="VAR_055018" description="In dbSNP:rs10034345.">
    <original>V</original>
    <variation>I</variation>
    <location>
        <position position="490"/>
    </location>
</feature>
<feature type="sequence variant" id="VAR_074166" description="In SCAR18." evidence="10">
    <original>A</original>
    <variation>D</variation>
    <location>
        <position position="654"/>
    </location>
</feature>
<feature type="sequence variant" id="VAR_074167" description="In SCAR18; constitutively open the extracellular-ligand-gated ion channel." evidence="10 12">
    <original>A</original>
    <variation>T</variation>
    <location>
        <position position="654"/>
    </location>
</feature>
<feature type="sequence variant" id="VAR_074168" description="In SCAR18." evidence="10">
    <original>L</original>
    <variation>V</variation>
    <location>
        <position position="656"/>
    </location>
</feature>
<feature type="mutagenesis site" description="Reduces binding to CBLN1; when associated with D76. Abolishes CBLN1 binding; when associated with A-26; A-61; D-76 and A-345. Abolishes synapse assembly; when associated with A-26; A-61 and A-345. Abolishes cerebellar parallel fiber-Purkinje cell synapse formation; when associated with A-26; A-61 and A-345. Abolishes D-Serine-dependent long term synaptic depression at PF-PC synapses; when associated with A-26; A-61 and A-345." evidence="12">
    <original>D</original>
    <variation>A</variation>
    <location>
        <position position="24"/>
    </location>
</feature>
<feature type="mutagenesis site" description="Reduces binding to CBLN1; when associated with D76." evidence="12">
    <original>S</original>
    <variation>A</variation>
    <location>
        <position position="25"/>
    </location>
</feature>
<feature type="mutagenesis site" description="Reduces binding to CBLN1; when associated with D76. Abolishes CBLN1 binding; when associated with A-24; A-61; D-76 and A-345. Abolishes synapse assembly; when associated with A-24; A-61 and A-345. Abolishes cerebellar parallel fiber-Purkinje cell synapse formation; when associated with A-24; A-61 and A-345. Abolishes D-Serine-dependent long term synaptic depression at PF-PC synapses; when associated with A-24; A-61 and A-345." evidence="12">
    <original>I</original>
    <variation>A</variation>
    <location>
        <position position="26"/>
    </location>
</feature>
<feature type="mutagenesis site" description="No effect on CBLN1 interaction; when associated with D76." evidence="12">
    <original>T</original>
    <variation>A</variation>
    <location>
        <position position="60"/>
    </location>
</feature>
<feature type="mutagenesis site" description="Reduces binding to CBLN1; when associated with D76. Abolishes CBLN1 binding; when associated with A-24; A-26; D-76 and A-345. Abolishes synapse assembly; when associated with A-24; A-26 and A-345. Abolishes cerebellar parallel fiber-Purkinje cell synapse formation; when associated with A-24; A-26 and A-345. Abolishes D-Serine-dependent long term synaptic depression at PF-PC synapses; when associated with A-24; A-26 and A-345." evidence="12">
    <original>E</original>
    <variation>A</variation>
    <location>
        <position position="61"/>
    </location>
</feature>
<feature type="mutagenesis site" description="Monomeric form. Does not dimerize. Weakly interacts with C1q domain of CBLN1. Forms intermediate synapse. Abolishes cerebellar parallel fiber-Purkinje cell synapse formation. Abolishes D-Serine?dependent long term synaptic depression at PF-PC synapses. Does not recover motor coordination in experiment of transfection in Grid2-null mice." evidence="12">
    <original>F</original>
    <variation>D</variation>
    <location>
        <position position="76"/>
    </location>
</feature>
<feature type="mutagenesis site" description="Reduces binding to CBLN1; when associated with D76." evidence="12">
    <original>L</original>
    <variation>A</variation>
    <location>
        <position position="342"/>
    </location>
</feature>
<feature type="mutagenesis site" description="No effect on CBLN1 interaction; when associated with D76. No effect on CBLN1 binding; when associated with D-76; A-346; A-349 and A-350. No effect on synapse assembly; when associated with A-346; A-349 and A-350. No effect on cerebellar parallel fiber-Purkinje cell synapse formation; when associated with A-346; A-349 and A-350. Does not affect D-Serine?dependent long term synaptic depression at PF-PC synapses; when associated with A-346; A-349 and A-350. Does not affect motor coordination; when associated with A-346; A-349 and A-350." evidence="12">
    <original>E</original>
    <variation>A</variation>
    <location>
        <position position="343"/>
    </location>
</feature>
<feature type="mutagenesis site" description="No effect on CBLN1 interaction; when associated with D76." evidence="12">
    <original>D</original>
    <variation>A</variation>
    <location>
        <position position="344"/>
    </location>
</feature>
<feature type="mutagenesis site" description="Reduces binding to CBLN1; when associated with D76. Abolishes CBLN1 binding; when associated with A-24; A-26; A-61 and D-76. Abolishes synapse assembly; when associated with A-24; A-26 and A-61. Abolishes cerebellar parallel fiber-Purkinje cell synapse formation; when associated with A-24; A-26 and A-61. Abolishes D-Serine-dependent long term synaptic depression at PF-PC synapses; when associated with A-24; A-26 and A-61." evidence="12">
    <original>R</original>
    <variation>A</variation>
    <location>
        <position position="345"/>
    </location>
</feature>
<feature type="mutagenesis site" description="No effect on CBLN1 interaction; when associated with D76. No effect on CBLN1 binding; when associated with D-76; A-343; A-349 and A-350. No effect on synapse assembly; when associated with A-343; A-349 and A-350. No effect on cerebellar parallel fiber-Purkinje cell synapse formation; when associated with A-343; A-349 and A-350. Does not affect D-Serine?dependent long term synaptic depression at PF-PC synapses; when associated with A-343; A-349 and A-350. Does not affect motor coordination; when associated with A-343; A-349 and A-350." evidence="12">
    <original>K</original>
    <variation>A</variation>
    <location>
        <position position="346"/>
    </location>
</feature>
<feature type="mutagenesis site" description="Reduces binding to CBLN1; when associated with D76." evidence="12">
    <original>H</original>
    <variation>A</variation>
    <location>
        <position position="348"/>
    </location>
</feature>
<feature type="mutagenesis site" description="No effect on CBLN1 interaction; when associated with D76. No effect on CBLN1 binding; when associated with D-76; A-343; A-346 and A-350. No effect on synapse assembly; when associated with A-343; A-346 and A-350. No effect on cerebellar parallel fiber-Purkinje cell synapse formation; when associated with A-343; A-346 and A-350. Does not affect D-Serine?dependent long term synaptic depression at PF-PC synapses; when associated with A-343; A-346 and A-350. Does not affect motor coordination; when associated with A-343; A-346 and A-350." evidence="12">
    <original>S</original>
    <variation>A</variation>
    <location>
        <position position="349"/>
    </location>
</feature>
<feature type="mutagenesis site" description="No effect on CBLN1 interaction; when associated with D76. No effect on CBLN1 binding; when associated with D-76; A-343; A-346 and A-349. No effect on synapse assembly; when associated with A-343; A-346 and A-349. No effect on cerebellar parallel fiber-Purkinje cell synapse formation; when associated with A-343; A-346 and A-349. Does not affect D-Serine?dependent long term synaptic depression at PF-PC synapses; when associated with A-343; A-346 and A-349. Does not affect motor coordination; when associated with A-343; A-346 and A-349." evidence="12">
    <original>M</original>
    <variation>A</variation>
    <location>
        <position position="350"/>
    </location>
</feature>
<feature type="mutagenesis site" description="Reduces binding to CBLN1; when associated with D76." evidence="12">
    <original>S</original>
    <variation>A</variation>
    <location>
        <position position="352"/>
    </location>
</feature>
<feature type="mutagenesis site" description="No effect on CBLN1 interaction; when associated with D76." evidence="12">
    <original>Q</original>
    <variation>A</variation>
    <location>
        <position position="364"/>
    </location>
</feature>
<feature type="mutagenesis site" description="Impairs the ability of the LBD to induce pore closure. No effect on synapse assembly. No effect on cerebellar parallel fiber-Purkinje cell synapse formation. Abolishes D-Serine?dependent long term synaptic depression at PF-PC synapses. Does not affect motor coordination." evidence="12">
    <original>L</original>
    <variation>ELSNGTDGAS</variation>
    <location>
        <position position="434"/>
    </location>
</feature>
<feature type="mutagenesis site" description="Abolishes activation by GRIA1 of cation-channel activity." evidence="9">
    <original>V</original>
    <variation>R</variation>
    <location>
        <position position="617"/>
    </location>
</feature>
<feature type="sequence conflict" description="In Ref. 1; AAC39579 and 4; AAH99652/AAH99653/AAH99654." evidence="17" ref="1 4">
    <original>F</original>
    <variation>L</variation>
    <location>
        <position position="6"/>
    </location>
</feature>
<feature type="sequence conflict" description="In Ref. 4; AAH99652." evidence="17" ref="4">
    <original>L</original>
    <variation>F</variation>
    <location>
        <position position="8"/>
    </location>
</feature>
<feature type="sequence conflict" description="In Ref. 1; AAC39579." evidence="17" ref="1">
    <original>V</original>
    <variation>I</variation>
    <location>
        <position position="290"/>
    </location>
</feature>
<feature type="sequence conflict" description="In Ref. 1; AAC39579." evidence="17" ref="1">
    <original>G</original>
    <variation>C</variation>
    <location>
        <position position="462"/>
    </location>
</feature>
<feature type="sequence conflict" description="In Ref. 4; AAH99652." evidence="17" ref="4">
    <original>D</original>
    <variation>E</variation>
    <location>
        <position position="557"/>
    </location>
</feature>
<feature type="sequence conflict" description="In Ref. 1; AAC39579." evidence="17" ref="1">
    <original>N</original>
    <variation>Y</variation>
    <location>
        <position position="752"/>
    </location>
</feature>
<feature type="strand" evidence="21">
    <location>
        <begin position="27"/>
        <end position="34"/>
    </location>
</feature>
<feature type="helix" evidence="21">
    <location>
        <begin position="38"/>
        <end position="53"/>
    </location>
</feature>
<feature type="strand" evidence="21">
    <location>
        <begin position="63"/>
        <end position="70"/>
    </location>
</feature>
<feature type="helix" evidence="21">
    <location>
        <begin position="75"/>
        <end position="88"/>
    </location>
</feature>
<feature type="strand" evidence="21">
    <location>
        <begin position="93"/>
        <end position="97"/>
    </location>
</feature>
<feature type="helix" evidence="21">
    <location>
        <begin position="99"/>
        <end position="112"/>
    </location>
</feature>
<feature type="strand" evidence="21">
    <location>
        <begin position="116"/>
        <end position="120"/>
    </location>
</feature>
<feature type="strand" evidence="22">
    <location>
        <begin position="137"/>
        <end position="139"/>
    </location>
</feature>
<feature type="strand" evidence="21">
    <location>
        <begin position="143"/>
        <end position="145"/>
    </location>
</feature>
<feature type="helix" evidence="21">
    <location>
        <begin position="152"/>
        <end position="162"/>
    </location>
</feature>
<feature type="strand" evidence="21">
    <location>
        <begin position="167"/>
        <end position="172"/>
    </location>
</feature>
<feature type="helix" evidence="21">
    <location>
        <begin position="178"/>
        <end position="181"/>
    </location>
</feature>
<feature type="helix" evidence="21">
    <location>
        <begin position="182"/>
        <end position="190"/>
    </location>
</feature>
<feature type="strand" evidence="21">
    <location>
        <begin position="194"/>
        <end position="199"/>
    </location>
</feature>
<feature type="helix" evidence="21">
    <location>
        <begin position="204"/>
        <end position="214"/>
    </location>
</feature>
<feature type="helix" evidence="21">
    <location>
        <begin position="217"/>
        <end position="226"/>
    </location>
</feature>
<feature type="strand" evidence="21">
    <location>
        <begin position="229"/>
        <end position="234"/>
    </location>
</feature>
<feature type="helix" evidence="21">
    <location>
        <begin position="236"/>
        <end position="248"/>
    </location>
</feature>
<feature type="strand" evidence="21">
    <location>
        <begin position="257"/>
        <end position="261"/>
    </location>
</feature>
<feature type="helix" evidence="21">
    <location>
        <begin position="267"/>
        <end position="276"/>
    </location>
</feature>
<feature type="strand" evidence="21">
    <location>
        <begin position="279"/>
        <end position="287"/>
    </location>
</feature>
<feature type="helix" evidence="21">
    <location>
        <begin position="294"/>
        <end position="297"/>
    </location>
</feature>
<feature type="strand" evidence="21">
    <location>
        <begin position="298"/>
        <end position="300"/>
    </location>
</feature>
<feature type="helix" evidence="21">
    <location>
        <begin position="307"/>
        <end position="310"/>
    </location>
</feature>
<feature type="helix" evidence="21">
    <location>
        <begin position="315"/>
        <end position="318"/>
    </location>
</feature>
<feature type="helix" evidence="21">
    <location>
        <begin position="322"/>
        <end position="343"/>
    </location>
</feature>
<feature type="strand" evidence="21">
    <location>
        <begin position="355"/>
        <end position="357"/>
    </location>
</feature>
<feature type="helix" evidence="21">
    <location>
        <begin position="366"/>
        <end position="374"/>
    </location>
</feature>
<feature type="strand" evidence="21">
    <location>
        <begin position="377"/>
        <end position="380"/>
    </location>
</feature>
<feature type="strand" evidence="21">
    <location>
        <begin position="383"/>
        <end position="386"/>
    </location>
</feature>
<feature type="strand" evidence="21">
    <location>
        <begin position="397"/>
        <end position="402"/>
    </location>
</feature>
<feature type="strand" evidence="21">
    <location>
        <begin position="414"/>
        <end position="420"/>
    </location>
</feature>
<feature type="turn" evidence="21">
    <location>
        <begin position="421"/>
        <end position="423"/>
    </location>
</feature>
<feature type="strand" evidence="21">
    <location>
        <begin position="424"/>
        <end position="427"/>
    </location>
</feature>
<accession>O43424</accession>
<accession>E9PH24</accession>
<accession>Q4KKU8</accession>
<accession>Q4KKU9</accession>
<accession>Q4KKV0</accession>
<accession>Q59FZ1</accession>
<gene>
    <name type="primary">GRID2</name>
    <name type="synonym">GLURD2</name>
</gene>
<dbReference type="EMBL" id="AF009014">
    <property type="protein sequence ID" value="AAC39579.1"/>
    <property type="molecule type" value="mRNA"/>
</dbReference>
<dbReference type="EMBL" id="AB209318">
    <property type="protein sequence ID" value="BAD92555.1"/>
    <property type="status" value="ALT_INIT"/>
    <property type="molecule type" value="mRNA"/>
</dbReference>
<dbReference type="EMBL" id="AC020699">
    <property type="status" value="NOT_ANNOTATED_CDS"/>
    <property type="molecule type" value="Genomic_DNA"/>
</dbReference>
<dbReference type="EMBL" id="AC022317">
    <property type="status" value="NOT_ANNOTATED_CDS"/>
    <property type="molecule type" value="Genomic_DNA"/>
</dbReference>
<dbReference type="EMBL" id="AC093596">
    <property type="status" value="NOT_ANNOTATED_CDS"/>
    <property type="molecule type" value="Genomic_DNA"/>
</dbReference>
<dbReference type="EMBL" id="AC093733">
    <property type="status" value="NOT_ANNOTATED_CDS"/>
    <property type="molecule type" value="Genomic_DNA"/>
</dbReference>
<dbReference type="EMBL" id="AC095059">
    <property type="status" value="NOT_ANNOTATED_CDS"/>
    <property type="molecule type" value="Genomic_DNA"/>
</dbReference>
<dbReference type="EMBL" id="AC096769">
    <property type="status" value="NOT_ANNOTATED_CDS"/>
    <property type="molecule type" value="Genomic_DNA"/>
</dbReference>
<dbReference type="EMBL" id="AC104077">
    <property type="status" value="NOT_ANNOTATED_CDS"/>
    <property type="molecule type" value="Genomic_DNA"/>
</dbReference>
<dbReference type="EMBL" id="AC105315">
    <property type="status" value="NOT_ANNOTATED_CDS"/>
    <property type="molecule type" value="Genomic_DNA"/>
</dbReference>
<dbReference type="EMBL" id="AC105452">
    <property type="status" value="NOT_ANNOTATED_CDS"/>
    <property type="molecule type" value="Genomic_DNA"/>
</dbReference>
<dbReference type="EMBL" id="AC108158">
    <property type="status" value="NOT_ANNOTATED_CDS"/>
    <property type="molecule type" value="Genomic_DNA"/>
</dbReference>
<dbReference type="EMBL" id="AC110800">
    <property type="status" value="NOT_ANNOTATED_CDS"/>
    <property type="molecule type" value="Genomic_DNA"/>
</dbReference>
<dbReference type="EMBL" id="AC112695">
    <property type="status" value="NOT_ANNOTATED_CDS"/>
    <property type="molecule type" value="Genomic_DNA"/>
</dbReference>
<dbReference type="EMBL" id="AC115111">
    <property type="status" value="NOT_ANNOTATED_CDS"/>
    <property type="molecule type" value="Genomic_DNA"/>
</dbReference>
<dbReference type="EMBL" id="AC115537">
    <property type="status" value="NOT_ANNOTATED_CDS"/>
    <property type="molecule type" value="Genomic_DNA"/>
</dbReference>
<dbReference type="EMBL" id="BC099652">
    <property type="protein sequence ID" value="AAH99652.1"/>
    <property type="molecule type" value="mRNA"/>
</dbReference>
<dbReference type="EMBL" id="BC099653">
    <property type="protein sequence ID" value="AAH99653.1"/>
    <property type="molecule type" value="mRNA"/>
</dbReference>
<dbReference type="EMBL" id="BC099654">
    <property type="protein sequence ID" value="AAH99654.1"/>
    <property type="molecule type" value="mRNA"/>
</dbReference>
<dbReference type="CCDS" id="CCDS3637.1">
    <molecule id="O43424-1"/>
</dbReference>
<dbReference type="CCDS" id="CCDS68758.1">
    <molecule id="O43424-2"/>
</dbReference>
<dbReference type="RefSeq" id="NP_001273767.1">
    <molecule id="O43424-2"/>
    <property type="nucleotide sequence ID" value="NM_001286838.1"/>
</dbReference>
<dbReference type="RefSeq" id="NP_001501.2">
    <molecule id="O43424-1"/>
    <property type="nucleotide sequence ID" value="NM_001510.4"/>
</dbReference>
<dbReference type="PDB" id="5KC8">
    <property type="method" value="X-ray"/>
    <property type="resolution" value="1.75 A"/>
    <property type="chains" value="A=24-440"/>
</dbReference>
<dbReference type="PDB" id="5KCA">
    <property type="method" value="X-ray"/>
    <property type="resolution" value="3.10 A"/>
    <property type="chains" value="A=24-440"/>
</dbReference>
<dbReference type="PDBsum" id="5KC8"/>
<dbReference type="PDBsum" id="5KCA"/>
<dbReference type="SMR" id="O43424"/>
<dbReference type="BioGRID" id="109152">
    <property type="interactions" value="10"/>
</dbReference>
<dbReference type="FunCoup" id="O43424">
    <property type="interactions" value="519"/>
</dbReference>
<dbReference type="IntAct" id="O43424">
    <property type="interactions" value="1"/>
</dbReference>
<dbReference type="MINT" id="O43424"/>
<dbReference type="STRING" id="9606.ENSP00000282020"/>
<dbReference type="ChEMBL" id="CHEMBL4524129"/>
<dbReference type="GlyCosmos" id="O43424">
    <property type="glycosylation" value="4 sites, No reported glycans"/>
</dbReference>
<dbReference type="GlyGen" id="O43424">
    <property type="glycosylation" value="6 sites, 1 N-linked glycan (1 site), 1 O-linked glycan (1 site)"/>
</dbReference>
<dbReference type="iPTMnet" id="O43424"/>
<dbReference type="PhosphoSitePlus" id="O43424"/>
<dbReference type="BioMuta" id="GRID2"/>
<dbReference type="jPOST" id="O43424"/>
<dbReference type="MassIVE" id="O43424"/>
<dbReference type="PaxDb" id="9606-ENSP00000282020"/>
<dbReference type="PeptideAtlas" id="O43424"/>
<dbReference type="ProteomicsDB" id="20442"/>
<dbReference type="ProteomicsDB" id="48936">
    <molecule id="O43424-1"/>
</dbReference>
<dbReference type="Pumba" id="O43424"/>
<dbReference type="Antibodypedia" id="25698">
    <property type="antibodies" value="116 antibodies from 27 providers"/>
</dbReference>
<dbReference type="DNASU" id="2895"/>
<dbReference type="Ensembl" id="ENST00000282020.9">
    <molecule id="O43424-1"/>
    <property type="protein sequence ID" value="ENSP00000282020.4"/>
    <property type="gene ID" value="ENSG00000152208.13"/>
</dbReference>
<dbReference type="Ensembl" id="ENST00000510992.5">
    <molecule id="O43424-2"/>
    <property type="protein sequence ID" value="ENSP00000421257.1"/>
    <property type="gene ID" value="ENSG00000152208.13"/>
</dbReference>
<dbReference type="GeneID" id="2895"/>
<dbReference type="KEGG" id="hsa:2895"/>
<dbReference type="MANE-Select" id="ENST00000282020.9">
    <property type="protein sequence ID" value="ENSP00000282020.4"/>
    <property type="RefSeq nucleotide sequence ID" value="NM_001510.4"/>
    <property type="RefSeq protein sequence ID" value="NP_001501.2"/>
</dbReference>
<dbReference type="UCSC" id="uc011cdt.4">
    <molecule id="O43424-1"/>
    <property type="organism name" value="human"/>
</dbReference>
<dbReference type="AGR" id="HGNC:4576"/>
<dbReference type="CTD" id="2895"/>
<dbReference type="DisGeNET" id="2895"/>
<dbReference type="GeneCards" id="GRID2"/>
<dbReference type="HGNC" id="HGNC:4576">
    <property type="gene designation" value="GRID2"/>
</dbReference>
<dbReference type="HPA" id="ENSG00000152208">
    <property type="expression patterns" value="Group enriched (brain, testis)"/>
</dbReference>
<dbReference type="MalaCards" id="GRID2"/>
<dbReference type="MIM" id="602368">
    <property type="type" value="gene"/>
</dbReference>
<dbReference type="MIM" id="616204">
    <property type="type" value="phenotype"/>
</dbReference>
<dbReference type="neXtProt" id="NX_O43424"/>
<dbReference type="OpenTargets" id="ENSG00000152208"/>
<dbReference type="Orphanet" id="363432">
    <property type="disease" value="Autosomal recessive congenital cerebellar ataxia due to GRID2 deficiency"/>
</dbReference>
<dbReference type="PharmGKB" id="PA28971"/>
<dbReference type="VEuPathDB" id="HostDB:ENSG00000152208"/>
<dbReference type="eggNOG" id="KOG1052">
    <property type="taxonomic scope" value="Eukaryota"/>
</dbReference>
<dbReference type="GeneTree" id="ENSGT00940000155192"/>
<dbReference type="InParanoid" id="O43424"/>
<dbReference type="OMA" id="EXISNLY"/>
<dbReference type="OrthoDB" id="9472633at2759"/>
<dbReference type="PAN-GO" id="O43424">
    <property type="GO annotations" value="6 GO annotations based on evolutionary models"/>
</dbReference>
<dbReference type="PhylomeDB" id="O43424"/>
<dbReference type="TreeFam" id="TF352434"/>
<dbReference type="PathwayCommons" id="O43424"/>
<dbReference type="SignaLink" id="O43424"/>
<dbReference type="SIGNOR" id="O43424"/>
<dbReference type="BioGRID-ORCS" id="2895">
    <property type="hits" value="6 hits in 1151 CRISPR screens"/>
</dbReference>
<dbReference type="ChiTaRS" id="GRID2">
    <property type="organism name" value="human"/>
</dbReference>
<dbReference type="GeneWiki" id="GRID2"/>
<dbReference type="GenomeRNAi" id="2895"/>
<dbReference type="Pharos" id="O43424">
    <property type="development level" value="Tbio"/>
</dbReference>
<dbReference type="PRO" id="PR:O43424"/>
<dbReference type="Proteomes" id="UP000005640">
    <property type="component" value="Chromosome 4"/>
</dbReference>
<dbReference type="RNAct" id="O43424">
    <property type="molecule type" value="protein"/>
</dbReference>
<dbReference type="Bgee" id="ENSG00000152208">
    <property type="expression patterns" value="Expressed in right testis and 77 other cell types or tissues"/>
</dbReference>
<dbReference type="ExpressionAtlas" id="O43424">
    <property type="expression patterns" value="baseline and differential"/>
</dbReference>
<dbReference type="GO" id="GO:0032281">
    <property type="term" value="C:AMPA glutamate receptor complex"/>
    <property type="evidence" value="ECO:0000318"/>
    <property type="project" value="GO_Central"/>
</dbReference>
<dbReference type="GO" id="GO:0043197">
    <property type="term" value="C:dendritic spine"/>
    <property type="evidence" value="ECO:0000250"/>
    <property type="project" value="BHF-UCL"/>
</dbReference>
<dbReference type="GO" id="GO:0098978">
    <property type="term" value="C:glutamatergic synapse"/>
    <property type="evidence" value="ECO:0007669"/>
    <property type="project" value="Ensembl"/>
</dbReference>
<dbReference type="GO" id="GO:0008328">
    <property type="term" value="C:ionotropic glutamate receptor complex"/>
    <property type="evidence" value="ECO:0000250"/>
    <property type="project" value="BHF-UCL"/>
</dbReference>
<dbReference type="GO" id="GO:0098688">
    <property type="term" value="C:parallel fiber to Purkinje cell synapse"/>
    <property type="evidence" value="ECO:0007669"/>
    <property type="project" value="Ensembl"/>
</dbReference>
<dbReference type="GO" id="GO:0005886">
    <property type="term" value="C:plasma membrane"/>
    <property type="evidence" value="ECO:0000250"/>
    <property type="project" value="BHF-UCL"/>
</dbReference>
<dbReference type="GO" id="GO:0098839">
    <property type="term" value="C:postsynaptic density membrane"/>
    <property type="evidence" value="ECO:0000314"/>
    <property type="project" value="UniProt"/>
</dbReference>
<dbReference type="GO" id="GO:0045202">
    <property type="term" value="C:synapse"/>
    <property type="evidence" value="ECO:0000250"/>
    <property type="project" value="BHF-UCL"/>
</dbReference>
<dbReference type="GO" id="GO:0098820">
    <property type="term" value="C:trans-synaptic protein complex"/>
    <property type="evidence" value="ECO:0000314"/>
    <property type="project" value="UniProt"/>
</dbReference>
<dbReference type="GO" id="GO:0004971">
    <property type="term" value="F:AMPA glutamate receptor activity"/>
    <property type="evidence" value="ECO:0000318"/>
    <property type="project" value="GO_Central"/>
</dbReference>
<dbReference type="GO" id="GO:0008066">
    <property type="term" value="F:glutamate receptor activity"/>
    <property type="evidence" value="ECO:0000304"/>
    <property type="project" value="ProtInc"/>
</dbReference>
<dbReference type="GO" id="GO:0042802">
    <property type="term" value="F:identical protein binding"/>
    <property type="evidence" value="ECO:0007669"/>
    <property type="project" value="Ensembl"/>
</dbReference>
<dbReference type="GO" id="GO:0046872">
    <property type="term" value="F:metal ion binding"/>
    <property type="evidence" value="ECO:0007669"/>
    <property type="project" value="UniProtKB-KW"/>
</dbReference>
<dbReference type="GO" id="GO:0030165">
    <property type="term" value="F:PDZ domain binding"/>
    <property type="evidence" value="ECO:0000250"/>
    <property type="project" value="BHF-UCL"/>
</dbReference>
<dbReference type="GO" id="GO:0097110">
    <property type="term" value="F:scaffold protein binding"/>
    <property type="evidence" value="ECO:0000250"/>
    <property type="project" value="BHF-UCL"/>
</dbReference>
<dbReference type="GO" id="GO:1904315">
    <property type="term" value="F:transmitter-gated monoatomic ion channel activity involved in regulation of postsynaptic membrane potential"/>
    <property type="evidence" value="ECO:0000314"/>
    <property type="project" value="UniProt"/>
</dbReference>
<dbReference type="GO" id="GO:0021707">
    <property type="term" value="P:cerebellar granule cell differentiation"/>
    <property type="evidence" value="ECO:0000250"/>
    <property type="project" value="BHF-UCL"/>
</dbReference>
<dbReference type="GO" id="GO:0060079">
    <property type="term" value="P:excitatory postsynaptic potential"/>
    <property type="evidence" value="ECO:0000250"/>
    <property type="project" value="BHF-UCL"/>
</dbReference>
<dbReference type="GO" id="GO:1904861">
    <property type="term" value="P:excitatory synapse assembly"/>
    <property type="evidence" value="ECO:0000315"/>
    <property type="project" value="UniProtKB"/>
</dbReference>
<dbReference type="GO" id="GO:0007215">
    <property type="term" value="P:glutamate receptor signaling pathway"/>
    <property type="evidence" value="ECO:0000304"/>
    <property type="project" value="ProtInc"/>
</dbReference>
<dbReference type="GO" id="GO:0007157">
    <property type="term" value="P:heterophilic cell-cell adhesion via plasma membrane cell adhesion molecules"/>
    <property type="evidence" value="ECO:0000250"/>
    <property type="project" value="BHF-UCL"/>
</dbReference>
<dbReference type="GO" id="GO:0050804">
    <property type="term" value="P:modulation of chemical synaptic transmission"/>
    <property type="evidence" value="ECO:0000318"/>
    <property type="project" value="GO_Central"/>
</dbReference>
<dbReference type="GO" id="GO:1900454">
    <property type="term" value="P:positive regulation of long-term synaptic depression"/>
    <property type="evidence" value="ECO:0000315"/>
    <property type="project" value="UniProtKB"/>
</dbReference>
<dbReference type="GO" id="GO:0051965">
    <property type="term" value="P:positive regulation of synapse assembly"/>
    <property type="evidence" value="ECO:0000315"/>
    <property type="project" value="UniProtKB"/>
</dbReference>
<dbReference type="GO" id="GO:0060134">
    <property type="term" value="P:prepulse inhibition"/>
    <property type="evidence" value="ECO:0000250"/>
    <property type="project" value="BHF-UCL"/>
</dbReference>
<dbReference type="GO" id="GO:0008104">
    <property type="term" value="P:protein localization"/>
    <property type="evidence" value="ECO:0000250"/>
    <property type="project" value="BHF-UCL"/>
</dbReference>
<dbReference type="GO" id="GO:0043523">
    <property type="term" value="P:regulation of neuron apoptotic process"/>
    <property type="evidence" value="ECO:0000250"/>
    <property type="project" value="BHF-UCL"/>
</dbReference>
<dbReference type="GO" id="GO:0010975">
    <property type="term" value="P:regulation of neuron projection development"/>
    <property type="evidence" value="ECO:0007669"/>
    <property type="project" value="Ensembl"/>
</dbReference>
<dbReference type="GO" id="GO:0099151">
    <property type="term" value="P:regulation of postsynaptic density assembly"/>
    <property type="evidence" value="ECO:0007669"/>
    <property type="project" value="Ensembl"/>
</dbReference>
<dbReference type="GO" id="GO:0099072">
    <property type="term" value="P:regulation of postsynaptic membrane neurotransmitter receptor levels"/>
    <property type="evidence" value="ECO:0007669"/>
    <property type="project" value="Ensembl"/>
</dbReference>
<dbReference type="GO" id="GO:1905606">
    <property type="term" value="P:regulation of presynapse assembly"/>
    <property type="evidence" value="ECO:0007669"/>
    <property type="project" value="Ensembl"/>
</dbReference>
<dbReference type="GO" id="GO:0099538">
    <property type="term" value="P:synaptic signaling via neuropeptide"/>
    <property type="evidence" value="ECO:0000314"/>
    <property type="project" value="UniProt"/>
</dbReference>
<dbReference type="GO" id="GO:0035249">
    <property type="term" value="P:synaptic transmission, glutamatergic"/>
    <property type="evidence" value="ECO:0000250"/>
    <property type="project" value="BHF-UCL"/>
</dbReference>
<dbReference type="CDD" id="cd06391">
    <property type="entry name" value="PBP1_iGluR_delta_2"/>
    <property type="match status" value="1"/>
</dbReference>
<dbReference type="CDD" id="cd13731">
    <property type="entry name" value="PBP2_iGluR_delta_2"/>
    <property type="match status" value="1"/>
</dbReference>
<dbReference type="FunFam" id="3.40.190.10:FF:000024">
    <property type="entry name" value="Glutamate receptor, ionotropic, delta 1"/>
    <property type="match status" value="1"/>
</dbReference>
<dbReference type="FunFam" id="3.40.50.2300:FF:000068">
    <property type="entry name" value="Glutamate receptor, ionotropic, delta 1b"/>
    <property type="match status" value="1"/>
</dbReference>
<dbReference type="FunFam" id="1.10.287.70:FF:000045">
    <property type="entry name" value="Glutamate receptor, ionotropic, delta 2"/>
    <property type="match status" value="1"/>
</dbReference>
<dbReference type="FunFam" id="3.40.190.10:FF:000040">
    <property type="entry name" value="Glutamate receptor, ionotropic, delta 2"/>
    <property type="match status" value="1"/>
</dbReference>
<dbReference type="Gene3D" id="1.10.287.70">
    <property type="match status" value="1"/>
</dbReference>
<dbReference type="Gene3D" id="3.40.50.2300">
    <property type="match status" value="2"/>
</dbReference>
<dbReference type="Gene3D" id="3.40.190.10">
    <property type="entry name" value="Periplasmic binding protein-like II"/>
    <property type="match status" value="2"/>
</dbReference>
<dbReference type="InterPro" id="IPR001828">
    <property type="entry name" value="ANF_lig-bd_rcpt"/>
</dbReference>
<dbReference type="InterPro" id="IPR019594">
    <property type="entry name" value="Glu/Gly-bd"/>
</dbReference>
<dbReference type="InterPro" id="IPR001508">
    <property type="entry name" value="Iono_Glu_rcpt_met"/>
</dbReference>
<dbReference type="InterPro" id="IPR015683">
    <property type="entry name" value="Ionotropic_Glu_rcpt"/>
</dbReference>
<dbReference type="InterPro" id="IPR001320">
    <property type="entry name" value="Iontro_rcpt_C"/>
</dbReference>
<dbReference type="InterPro" id="IPR028082">
    <property type="entry name" value="Peripla_BP_I"/>
</dbReference>
<dbReference type="PANTHER" id="PTHR18966">
    <property type="entry name" value="IONOTROPIC GLUTAMATE RECEPTOR"/>
    <property type="match status" value="1"/>
</dbReference>
<dbReference type="Pfam" id="PF01094">
    <property type="entry name" value="ANF_receptor"/>
    <property type="match status" value="1"/>
</dbReference>
<dbReference type="Pfam" id="PF00060">
    <property type="entry name" value="Lig_chan"/>
    <property type="match status" value="1"/>
</dbReference>
<dbReference type="Pfam" id="PF10613">
    <property type="entry name" value="Lig_chan-Glu_bd"/>
    <property type="match status" value="1"/>
</dbReference>
<dbReference type="PRINTS" id="PR00177">
    <property type="entry name" value="NMDARECEPTOR"/>
</dbReference>
<dbReference type="SMART" id="SM00918">
    <property type="entry name" value="Lig_chan-Glu_bd"/>
    <property type="match status" value="1"/>
</dbReference>
<dbReference type="SMART" id="SM00079">
    <property type="entry name" value="PBPe"/>
    <property type="match status" value="1"/>
</dbReference>
<dbReference type="SUPFAM" id="SSF53822">
    <property type="entry name" value="Periplasmic binding protein-like I"/>
    <property type="match status" value="1"/>
</dbReference>
<dbReference type="SUPFAM" id="SSF53850">
    <property type="entry name" value="Periplasmic binding protein-like II"/>
    <property type="match status" value="1"/>
</dbReference>